<organism>
    <name type="scientific">Escherichia coli (strain K12)</name>
    <dbReference type="NCBI Taxonomy" id="83333"/>
    <lineage>
        <taxon>Bacteria</taxon>
        <taxon>Pseudomonadati</taxon>
        <taxon>Pseudomonadota</taxon>
        <taxon>Gammaproteobacteria</taxon>
        <taxon>Enterobacterales</taxon>
        <taxon>Enterobacteriaceae</taxon>
        <taxon>Escherichia</taxon>
    </lineage>
</organism>
<name>GATD_ECOLI</name>
<dbReference type="EC" id="1.1.1.251" evidence="2"/>
<dbReference type="EMBL" id="X79837">
    <property type="protein sequence ID" value="CAA56231.1"/>
    <property type="molecule type" value="Genomic_DNA"/>
</dbReference>
<dbReference type="EMBL" id="U00096">
    <property type="protein sequence ID" value="AAC75152.1"/>
    <property type="molecule type" value="Genomic_DNA"/>
</dbReference>
<dbReference type="EMBL" id="AP009048">
    <property type="protein sequence ID" value="BAA15954.1"/>
    <property type="molecule type" value="Genomic_DNA"/>
</dbReference>
<dbReference type="PIR" id="B64976">
    <property type="entry name" value="B64976"/>
</dbReference>
<dbReference type="RefSeq" id="NP_416594.1">
    <property type="nucleotide sequence ID" value="NC_000913.3"/>
</dbReference>
<dbReference type="RefSeq" id="WP_000844219.1">
    <property type="nucleotide sequence ID" value="NZ_SSZK01000011.1"/>
</dbReference>
<dbReference type="PDB" id="4A2C">
    <property type="method" value="X-ray"/>
    <property type="resolution" value="1.87 A"/>
    <property type="chains" value="A/B=1-346"/>
</dbReference>
<dbReference type="PDB" id="4UEJ">
    <property type="method" value="X-ray"/>
    <property type="resolution" value="1.74 A"/>
    <property type="chains" value="A/B=1-346"/>
</dbReference>
<dbReference type="PDB" id="4UEK">
    <property type="method" value="X-ray"/>
    <property type="resolution" value="1.90 A"/>
    <property type="chains" value="A/B=1-346"/>
</dbReference>
<dbReference type="PDB" id="4UEO">
    <property type="method" value="X-ray"/>
    <property type="resolution" value="2.00 A"/>
    <property type="chains" value="A/B=1-346"/>
</dbReference>
<dbReference type="PDBsum" id="4A2C"/>
<dbReference type="PDBsum" id="4UEJ"/>
<dbReference type="PDBsum" id="4UEK"/>
<dbReference type="PDBsum" id="4UEO"/>
<dbReference type="SMR" id="P0A9S3"/>
<dbReference type="BioGRID" id="4260429">
    <property type="interactions" value="33"/>
</dbReference>
<dbReference type="DIP" id="DIP-47890N"/>
<dbReference type="FunCoup" id="P0A9S3">
    <property type="interactions" value="145"/>
</dbReference>
<dbReference type="IntAct" id="P0A9S3">
    <property type="interactions" value="17"/>
</dbReference>
<dbReference type="MINT" id="P0A9S3"/>
<dbReference type="STRING" id="511145.b2091"/>
<dbReference type="jPOST" id="P0A9S3"/>
<dbReference type="PaxDb" id="511145-b2091"/>
<dbReference type="EnsemblBacteria" id="AAC75152">
    <property type="protein sequence ID" value="AAC75152"/>
    <property type="gene ID" value="b2091"/>
</dbReference>
<dbReference type="GeneID" id="946598"/>
<dbReference type="KEGG" id="ecj:JW2075"/>
<dbReference type="KEGG" id="eco:b2091"/>
<dbReference type="KEGG" id="ecoc:C3026_11740"/>
<dbReference type="PATRIC" id="fig|1411691.4.peg.159"/>
<dbReference type="EchoBASE" id="EB2316"/>
<dbReference type="eggNOG" id="COG1063">
    <property type="taxonomic scope" value="Bacteria"/>
</dbReference>
<dbReference type="HOGENOM" id="CLU_026673_11_0_6"/>
<dbReference type="InParanoid" id="P0A9S3"/>
<dbReference type="OMA" id="LLPCFQC"/>
<dbReference type="OrthoDB" id="9773078at2"/>
<dbReference type="PhylomeDB" id="P0A9S3"/>
<dbReference type="BioCyc" id="EcoCyc:GALACTITOLPDEHYD-MONOMER"/>
<dbReference type="BioCyc" id="MetaCyc:GALACTITOLPDEHYD-MONOMER"/>
<dbReference type="BRENDA" id="1.1.1.251">
    <property type="organism ID" value="2026"/>
</dbReference>
<dbReference type="EvolutionaryTrace" id="P0A9S3"/>
<dbReference type="PRO" id="PR:P0A9S3"/>
<dbReference type="Proteomes" id="UP000000625">
    <property type="component" value="Chromosome"/>
</dbReference>
<dbReference type="GO" id="GO:0005829">
    <property type="term" value="C:cytosol"/>
    <property type="evidence" value="ECO:0000314"/>
    <property type="project" value="EcoCyc"/>
</dbReference>
<dbReference type="GO" id="GO:0008868">
    <property type="term" value="F:galactitol-1-phosphate 5-dehydrogenase activity"/>
    <property type="evidence" value="ECO:0000314"/>
    <property type="project" value="EcoCyc"/>
</dbReference>
<dbReference type="GO" id="GO:0042802">
    <property type="term" value="F:identical protein binding"/>
    <property type="evidence" value="ECO:0000353"/>
    <property type="project" value="IntAct"/>
</dbReference>
<dbReference type="GO" id="GO:0042803">
    <property type="term" value="F:protein homodimerization activity"/>
    <property type="evidence" value="ECO:0000314"/>
    <property type="project" value="EcoCyc"/>
</dbReference>
<dbReference type="GO" id="GO:0008270">
    <property type="term" value="F:zinc ion binding"/>
    <property type="evidence" value="ECO:0000314"/>
    <property type="project" value="EcoCyc"/>
</dbReference>
<dbReference type="GO" id="GO:0019404">
    <property type="term" value="P:galactitol catabolic process"/>
    <property type="evidence" value="ECO:0000315"/>
    <property type="project" value="EcoCyc"/>
</dbReference>
<dbReference type="CDD" id="cd08236">
    <property type="entry name" value="sugar_DH"/>
    <property type="match status" value="1"/>
</dbReference>
<dbReference type="FunFam" id="3.40.50.720:FF:000332">
    <property type="entry name" value="Galactitol-1-phosphate 5-dehydrogenase"/>
    <property type="match status" value="1"/>
</dbReference>
<dbReference type="Gene3D" id="3.90.180.10">
    <property type="entry name" value="Medium-chain alcohol dehydrogenases, catalytic domain"/>
    <property type="match status" value="1"/>
</dbReference>
<dbReference type="Gene3D" id="3.40.50.720">
    <property type="entry name" value="NAD(P)-binding Rossmann-like Domain"/>
    <property type="match status" value="1"/>
</dbReference>
<dbReference type="InterPro" id="IPR013149">
    <property type="entry name" value="ADH-like_C"/>
</dbReference>
<dbReference type="InterPro" id="IPR013154">
    <property type="entry name" value="ADH-like_N"/>
</dbReference>
<dbReference type="InterPro" id="IPR002328">
    <property type="entry name" value="ADH_Zn_CS"/>
</dbReference>
<dbReference type="InterPro" id="IPR011032">
    <property type="entry name" value="GroES-like_sf"/>
</dbReference>
<dbReference type="InterPro" id="IPR036291">
    <property type="entry name" value="NAD(P)-bd_dom_sf"/>
</dbReference>
<dbReference type="InterPro" id="IPR020843">
    <property type="entry name" value="PKS_ER"/>
</dbReference>
<dbReference type="InterPro" id="IPR050129">
    <property type="entry name" value="Zn_alcohol_dh"/>
</dbReference>
<dbReference type="NCBIfam" id="NF007642">
    <property type="entry name" value="PRK10309.1"/>
    <property type="match status" value="1"/>
</dbReference>
<dbReference type="PANTHER" id="PTHR43401">
    <property type="entry name" value="L-THREONINE 3-DEHYDROGENASE"/>
    <property type="match status" value="1"/>
</dbReference>
<dbReference type="PANTHER" id="PTHR43401:SF2">
    <property type="entry name" value="L-THREONINE 3-DEHYDROGENASE"/>
    <property type="match status" value="1"/>
</dbReference>
<dbReference type="Pfam" id="PF08240">
    <property type="entry name" value="ADH_N"/>
    <property type="match status" value="1"/>
</dbReference>
<dbReference type="Pfam" id="PF00107">
    <property type="entry name" value="ADH_zinc_N"/>
    <property type="match status" value="1"/>
</dbReference>
<dbReference type="SMART" id="SM00829">
    <property type="entry name" value="PKS_ER"/>
    <property type="match status" value="1"/>
</dbReference>
<dbReference type="SUPFAM" id="SSF50129">
    <property type="entry name" value="GroES-like"/>
    <property type="match status" value="1"/>
</dbReference>
<dbReference type="SUPFAM" id="SSF51735">
    <property type="entry name" value="NAD(P)-binding Rossmann-fold domains"/>
    <property type="match status" value="1"/>
</dbReference>
<dbReference type="PROSITE" id="PS00059">
    <property type="entry name" value="ADH_ZINC"/>
    <property type="match status" value="1"/>
</dbReference>
<proteinExistence type="evidence at protein level"/>
<comment type="function">
    <text evidence="2">Converts galactitol 1-phosphate to D-tagatose 6-phosphate.</text>
</comment>
<comment type="catalytic activity">
    <reaction evidence="2">
        <text>galactitol 1-phosphate + NAD(+) = keto-D-tagatose 6-phosphate + NADH + H(+)</text>
        <dbReference type="Rhea" id="RHEA:28106"/>
        <dbReference type="ChEBI" id="CHEBI:15378"/>
        <dbReference type="ChEBI" id="CHEBI:57540"/>
        <dbReference type="ChEBI" id="CHEBI:57945"/>
        <dbReference type="ChEBI" id="CHEBI:60083"/>
        <dbReference type="ChEBI" id="CHEBI:134283"/>
        <dbReference type="EC" id="1.1.1.251"/>
    </reaction>
</comment>
<comment type="cofactor">
    <cofactor evidence="1">
        <name>Zn(2+)</name>
        <dbReference type="ChEBI" id="CHEBI:29105"/>
    </cofactor>
    <text evidence="1">Binds 2 Zn(2+) ions per subunit.</text>
</comment>
<comment type="interaction">
    <interactant intactId="EBI-1127517">
        <id>P0A9S3</id>
    </interactant>
    <interactant intactId="EBI-1127517">
        <id>P0A9S3</id>
        <label>gatD</label>
    </interactant>
    <organismsDiffer>false</organismsDiffer>
    <experiments>3</experiments>
</comment>
<comment type="similarity">
    <text evidence="3">Belongs to the zinc-containing alcohol dehydrogenase family.</text>
</comment>
<sequence>MKSVVNDTDGIVRVAESVIPEIKHQDEVRVKIASSGLCGSDLPRIFKNGAHYYPITLGHEFSGYIDAVGSGVDDLHPGDAVACVPLLPCFTCPECLKGFYSQCAKYDFIGSRRDGGFAEYIVVKRKNVFALPTDMPIEDGAFIEPITVGLHAFHLAQGCENKNVIIIGAGTIGLLAIQCAVALGAKSVTAIDISSEKLALAKSFGAMQTFNSSEMSAPQMQSVLRELRFNQLILETAGVPQTVELAVEIAGPHAQLALVGTLHQDLHLTSATFGKILRKELTVIGSWMNYSSPWPGQEWETASRLLTERKLSLEPLIAHRGSFESFAQAVRDIARNAMPGKVLLIP</sequence>
<feature type="chain" id="PRO_0000160879" description="Galactitol 1-phosphate 5-dehydrogenase">
    <location>
        <begin position="1"/>
        <end position="346"/>
    </location>
</feature>
<feature type="binding site" evidence="1">
    <location>
        <position position="38"/>
    </location>
    <ligand>
        <name>Zn(2+)</name>
        <dbReference type="ChEBI" id="CHEBI:29105"/>
        <label>1</label>
        <note>catalytic</note>
    </ligand>
</feature>
<feature type="binding site" evidence="1">
    <location>
        <position position="59"/>
    </location>
    <ligand>
        <name>Zn(2+)</name>
        <dbReference type="ChEBI" id="CHEBI:29105"/>
        <label>1</label>
        <note>catalytic</note>
    </ligand>
</feature>
<feature type="binding site" evidence="1">
    <location>
        <position position="89"/>
    </location>
    <ligand>
        <name>Zn(2+)</name>
        <dbReference type="ChEBI" id="CHEBI:29105"/>
        <label>2</label>
    </ligand>
</feature>
<feature type="binding site" evidence="1">
    <location>
        <position position="92"/>
    </location>
    <ligand>
        <name>Zn(2+)</name>
        <dbReference type="ChEBI" id="CHEBI:29105"/>
        <label>2</label>
    </ligand>
</feature>
<feature type="binding site" evidence="1">
    <location>
        <position position="95"/>
    </location>
    <ligand>
        <name>Zn(2+)</name>
        <dbReference type="ChEBI" id="CHEBI:29105"/>
        <label>2</label>
    </ligand>
</feature>
<feature type="binding site" evidence="1">
    <location>
        <position position="103"/>
    </location>
    <ligand>
        <name>Zn(2+)</name>
        <dbReference type="ChEBI" id="CHEBI:29105"/>
        <label>2</label>
    </ligand>
</feature>
<feature type="binding site" evidence="1">
    <location>
        <position position="144"/>
    </location>
    <ligand>
        <name>Zn(2+)</name>
        <dbReference type="ChEBI" id="CHEBI:29105"/>
        <label>1</label>
        <note>catalytic</note>
    </ligand>
</feature>
<feature type="sequence conflict" description="In Ref. 1; CAA56231." evidence="3" ref="1">
    <original>S</original>
    <variation>L</variation>
    <location>
        <position position="213"/>
    </location>
</feature>
<feature type="sequence conflict" description="In Ref. 1; CAA56231." evidence="3" ref="1">
    <original>S</original>
    <variation>G</variation>
    <location>
        <position position="222"/>
    </location>
</feature>
<feature type="sequence conflict" description="In Ref. 1; CAA56231." evidence="3" ref="1">
    <original>EL</original>
    <variation>DV</variation>
    <location>
        <begin position="226"/>
        <end position="227"/>
    </location>
</feature>
<feature type="sequence conflict" description="In Ref. 1; CAA56231." evidence="3" ref="1">
    <original>A</original>
    <variation>T</variation>
    <location>
        <position position="271"/>
    </location>
</feature>
<feature type="sequence conflict" description="In Ref. 1; CAA56231." evidence="3" ref="1">
    <original>AQA</original>
    <variation>TQV</variation>
    <location>
        <begin position="327"/>
        <end position="329"/>
    </location>
</feature>
<feature type="strand" evidence="4">
    <location>
        <begin position="2"/>
        <end position="7"/>
    </location>
</feature>
<feature type="helix" evidence="4">
    <location>
        <begin position="8"/>
        <end position="10"/>
    </location>
</feature>
<feature type="strand" evidence="4">
    <location>
        <begin position="11"/>
        <end position="16"/>
    </location>
</feature>
<feature type="strand" evidence="4">
    <location>
        <begin position="27"/>
        <end position="36"/>
    </location>
</feature>
<feature type="helix" evidence="4">
    <location>
        <begin position="41"/>
        <end position="46"/>
    </location>
</feature>
<feature type="strand" evidence="4">
    <location>
        <begin position="50"/>
        <end position="55"/>
    </location>
</feature>
<feature type="strand" evidence="4">
    <location>
        <begin position="60"/>
        <end position="68"/>
    </location>
</feature>
<feature type="strand" evidence="4">
    <location>
        <begin position="80"/>
        <end position="83"/>
    </location>
</feature>
<feature type="helix" evidence="4">
    <location>
        <begin position="93"/>
        <end position="96"/>
    </location>
</feature>
<feature type="helix" evidence="4">
    <location>
        <begin position="100"/>
        <end position="102"/>
    </location>
</feature>
<feature type="turn" evidence="4">
    <location>
        <begin position="109"/>
        <end position="111"/>
    </location>
</feature>
<feature type="strand" evidence="4">
    <location>
        <begin position="116"/>
        <end position="124"/>
    </location>
</feature>
<feature type="helix" evidence="4">
    <location>
        <begin position="125"/>
        <end position="127"/>
    </location>
</feature>
<feature type="strand" evidence="4">
    <location>
        <begin position="128"/>
        <end position="130"/>
    </location>
</feature>
<feature type="helix" evidence="4">
    <location>
        <begin position="137"/>
        <end position="142"/>
    </location>
</feature>
<feature type="helix" evidence="4">
    <location>
        <begin position="143"/>
        <end position="155"/>
    </location>
</feature>
<feature type="strand" evidence="4">
    <location>
        <begin position="163"/>
        <end position="167"/>
    </location>
</feature>
<feature type="helix" evidence="4">
    <location>
        <begin position="171"/>
        <end position="182"/>
    </location>
</feature>
<feature type="strand" evidence="4">
    <location>
        <begin position="186"/>
        <end position="195"/>
    </location>
</feature>
<feature type="helix" evidence="4">
    <location>
        <begin position="196"/>
        <end position="203"/>
    </location>
</feature>
<feature type="strand" evidence="4">
    <location>
        <begin position="207"/>
        <end position="211"/>
    </location>
</feature>
<feature type="turn" evidence="4">
    <location>
        <begin position="212"/>
        <end position="214"/>
    </location>
</feature>
<feature type="helix" evidence="4">
    <location>
        <begin position="217"/>
        <end position="223"/>
    </location>
</feature>
<feature type="helix" evidence="4">
    <location>
        <begin position="224"/>
        <end position="227"/>
    </location>
</feature>
<feature type="strand" evidence="4">
    <location>
        <begin position="229"/>
        <end position="235"/>
    </location>
</feature>
<feature type="helix" evidence="4">
    <location>
        <begin position="240"/>
        <end position="249"/>
    </location>
</feature>
<feature type="strand" evidence="4">
    <location>
        <begin position="255"/>
        <end position="258"/>
    </location>
</feature>
<feature type="strand" evidence="4">
    <location>
        <begin position="266"/>
        <end position="268"/>
    </location>
</feature>
<feature type="helix" evidence="4">
    <location>
        <begin position="270"/>
        <end position="278"/>
    </location>
</feature>
<feature type="strand" evidence="4">
    <location>
        <begin position="282"/>
        <end position="285"/>
    </location>
</feature>
<feature type="helix" evidence="4">
    <location>
        <begin position="297"/>
        <end position="307"/>
    </location>
</feature>
<feature type="helix" evidence="4">
    <location>
        <begin position="314"/>
        <end position="316"/>
    </location>
</feature>
<feature type="strand" evidence="4">
    <location>
        <begin position="317"/>
        <end position="321"/>
    </location>
</feature>
<feature type="helix" evidence="4">
    <location>
        <begin position="323"/>
        <end position="333"/>
    </location>
</feature>
<feature type="strand" evidence="4">
    <location>
        <begin position="340"/>
        <end position="344"/>
    </location>
</feature>
<protein>
    <recommendedName>
        <fullName>Galactitol 1-phosphate 5-dehydrogenase</fullName>
        <ecNumber evidence="2">1.1.1.251</ecNumber>
    </recommendedName>
</protein>
<reference key="1">
    <citation type="journal article" date="1995" name="Biochim. Biophys. Acta">
        <title>Sequence of the gat operon for galactitol utilization from a wild-type strain EC3132 of Escherichia coli.</title>
        <authorList>
            <person name="Nobelmann B."/>
            <person name="Lengeler J.W."/>
        </authorList>
    </citation>
    <scope>NUCLEOTIDE SEQUENCE [GENOMIC DNA]</scope>
    <source>
        <strain>EC3132</strain>
    </source>
</reference>
<reference key="2">
    <citation type="journal article" date="1996" name="DNA Res.">
        <title>A 460-kb DNA sequence of the Escherichia coli K-12 genome corresponding to the 40.1-50.0 min region on the linkage map.</title>
        <authorList>
            <person name="Itoh T."/>
            <person name="Aiba H."/>
            <person name="Baba T."/>
            <person name="Fujita K."/>
            <person name="Hayashi K."/>
            <person name="Inada T."/>
            <person name="Isono K."/>
            <person name="Kasai H."/>
            <person name="Kimura S."/>
            <person name="Kitakawa M."/>
            <person name="Kitagawa M."/>
            <person name="Makino K."/>
            <person name="Miki T."/>
            <person name="Mizobuchi K."/>
            <person name="Mori H."/>
            <person name="Mori T."/>
            <person name="Motomura K."/>
            <person name="Nakade S."/>
            <person name="Nakamura Y."/>
            <person name="Nashimoto H."/>
            <person name="Nishio Y."/>
            <person name="Oshima T."/>
            <person name="Saito N."/>
            <person name="Sampei G."/>
            <person name="Seki Y."/>
            <person name="Sivasundaram S."/>
            <person name="Tagami H."/>
            <person name="Takeda J."/>
            <person name="Takemoto K."/>
            <person name="Wada C."/>
            <person name="Yamamoto Y."/>
            <person name="Horiuchi T."/>
        </authorList>
    </citation>
    <scope>NUCLEOTIDE SEQUENCE [LARGE SCALE GENOMIC DNA]</scope>
    <source>
        <strain>K12 / W3110 / ATCC 27325 / DSM 5911</strain>
    </source>
</reference>
<reference key="3">
    <citation type="journal article" date="1997" name="Science">
        <title>The complete genome sequence of Escherichia coli K-12.</title>
        <authorList>
            <person name="Blattner F.R."/>
            <person name="Plunkett G. III"/>
            <person name="Bloch C.A."/>
            <person name="Perna N.T."/>
            <person name="Burland V."/>
            <person name="Riley M."/>
            <person name="Collado-Vides J."/>
            <person name="Glasner J.D."/>
            <person name="Rode C.K."/>
            <person name="Mayhew G.F."/>
            <person name="Gregor J."/>
            <person name="Davis N.W."/>
            <person name="Kirkpatrick H.A."/>
            <person name="Goeden M.A."/>
            <person name="Rose D.J."/>
            <person name="Mau B."/>
            <person name="Shao Y."/>
        </authorList>
    </citation>
    <scope>NUCLEOTIDE SEQUENCE [LARGE SCALE GENOMIC DNA]</scope>
    <source>
        <strain>K12 / MG1655 / ATCC 47076</strain>
    </source>
</reference>
<reference key="4">
    <citation type="journal article" date="2006" name="Mol. Syst. Biol.">
        <title>Highly accurate genome sequences of Escherichia coli K-12 strains MG1655 and W3110.</title>
        <authorList>
            <person name="Hayashi K."/>
            <person name="Morooka N."/>
            <person name="Yamamoto Y."/>
            <person name="Fujita K."/>
            <person name="Isono K."/>
            <person name="Choi S."/>
            <person name="Ohtsubo E."/>
            <person name="Baba T."/>
            <person name="Wanner B.L."/>
            <person name="Mori H."/>
            <person name="Horiuchi T."/>
        </authorList>
    </citation>
    <scope>NUCLEOTIDE SEQUENCE [LARGE SCALE GENOMIC DNA]</scope>
    <source>
        <strain>K12 / W3110 / ATCC 27325 / DSM 5911</strain>
    </source>
</reference>
<reference key="5">
    <citation type="journal article" date="1956" name="J. Bacteriol.">
        <title>Hexitol metabolism in Escherichia coli.</title>
        <authorList>
            <person name="Wolff J.B."/>
            <person name="Kaplan N.O."/>
        </authorList>
    </citation>
    <scope>FUNCTION</scope>
    <scope>CATALYTIC ACTIVITY</scope>
</reference>
<keyword id="KW-0002">3D-structure</keyword>
<keyword id="KW-0298">Galactitol metabolism</keyword>
<keyword id="KW-0479">Metal-binding</keyword>
<keyword id="KW-0520">NAD</keyword>
<keyword id="KW-0560">Oxidoreductase</keyword>
<keyword id="KW-1185">Reference proteome</keyword>
<keyword id="KW-0862">Zinc</keyword>
<gene>
    <name type="primary">gatD</name>
    <name type="ordered locus">b2091</name>
    <name type="ordered locus">JW2075</name>
</gene>
<evidence type="ECO:0000250" key="1"/>
<evidence type="ECO:0000269" key="2">
    <source>
    </source>
</evidence>
<evidence type="ECO:0000305" key="3"/>
<evidence type="ECO:0007829" key="4">
    <source>
        <dbReference type="PDB" id="4UEJ"/>
    </source>
</evidence>
<accession>P0A9S3</accession>
<accession>P37190</accession>
<accession>P76410</accession>